<organism>
    <name type="scientific">Petromyces alliaceus</name>
    <name type="common">Aspergillus alliaceus</name>
    <dbReference type="NCBI Taxonomy" id="209559"/>
    <lineage>
        <taxon>Eukaryota</taxon>
        <taxon>Fungi</taxon>
        <taxon>Dikarya</taxon>
        <taxon>Ascomycota</taxon>
        <taxon>Pezizomycotina</taxon>
        <taxon>Eurotiomycetes</taxon>
        <taxon>Eurotiomycetidae</taxon>
        <taxon>Eurotiales</taxon>
        <taxon>Aspergillaceae</taxon>
        <taxon>Aspergillus</taxon>
        <taxon>Aspergillus subgen. Circumdati</taxon>
    </lineage>
</organism>
<keyword id="KW-0045">Antibiotic biosynthesis</keyword>
<gene>
    <name evidence="3" type="primary">buaE</name>
</gene>
<accession>A0A411KZU9</accession>
<proteinExistence type="predicted"/>
<reference key="1">
    <citation type="journal article" date="2019" name="Org. Lett.">
        <title>Discovery and Heterologous Biosynthesis of the Burnettramic Acids: Rare PKS-NRPS-Derived Bolaamphiphilic Pyrrolizidinediones from an Australian Fungus, Aspergillus burnettii.</title>
        <authorList>
            <person name="Li H."/>
            <person name="Gilchrist C.L.M."/>
            <person name="Lacey H.J."/>
            <person name="Crombie A."/>
            <person name="Vuong D."/>
            <person name="Pitt J.I."/>
            <person name="Lacey E."/>
            <person name="Chooi Y.H."/>
            <person name="Piggott A.M."/>
        </authorList>
    </citation>
    <scope>NUCLEOTIDE SEQUENCE [GENOMIC DNA]</scope>
    <scope>FUNCTION</scope>
    <scope>PATHWAY</scope>
    <source>
        <strain>FRR 5400</strain>
    </source>
</reference>
<dbReference type="EMBL" id="MK425157">
    <property type="protein sequence ID" value="QBE85646.1"/>
    <property type="molecule type" value="Genomic_DNA"/>
</dbReference>
<dbReference type="GO" id="GO:0017000">
    <property type="term" value="P:antibiotic biosynthetic process"/>
    <property type="evidence" value="ECO:0007669"/>
    <property type="project" value="UniProtKB-KW"/>
</dbReference>
<dbReference type="InterPro" id="IPR053221">
    <property type="entry name" value="Burnettramic_acid_biosynth"/>
</dbReference>
<dbReference type="PANTHER" id="PTHR38887">
    <property type="entry name" value="CHROMOSOME 21, WHOLE GENOME SHOTGUN SEQUENCE"/>
    <property type="match status" value="1"/>
</dbReference>
<dbReference type="PANTHER" id="PTHR38887:SF1">
    <property type="entry name" value="RAS MODIFICATION PROTEIN ERF4"/>
    <property type="match status" value="1"/>
</dbReference>
<name>BUAF_PETAA</name>
<feature type="chain" id="PRO_0000448734" description="Burnettramic acids biosynthesis cluster protein E">
    <location>
        <begin position="1"/>
        <end position="412"/>
    </location>
</feature>
<feature type="region of interest" description="Disordered" evidence="1">
    <location>
        <begin position="1"/>
        <end position="66"/>
    </location>
</feature>
<feature type="region of interest" description="Disordered" evidence="1">
    <location>
        <begin position="308"/>
        <end position="342"/>
    </location>
</feature>
<feature type="region of interest" description="Disordered" evidence="1">
    <location>
        <begin position="386"/>
        <end position="412"/>
    </location>
</feature>
<feature type="compositionally biased region" description="Acidic residues" evidence="1">
    <location>
        <begin position="36"/>
        <end position="58"/>
    </location>
</feature>
<feature type="compositionally biased region" description="Polar residues" evidence="1">
    <location>
        <begin position="395"/>
        <end position="404"/>
    </location>
</feature>
<comment type="function">
    <text evidence="2 4">Part of the gene cluster that mediates the biosynthesis of burnettramic acids, an unusual class of bolaamphiphilic pyrrolizidinediones that display potent antibacterial, antifungal, and cytotoxic activities (PubMed:30735051). The first step of the biosynthesis of burnettramic acids is the hydroxylation of proline by the proline hydroxylase buaE to generate 4-hydroxyproline (PubMed:30735051). The PKS-NRPS buaA and trans-enoyl reductase buaC construct the highly reduced polyketide chain, and the condensation (C) domain of buaA then catalyzes the amide bond formation with the activated 4-hydroxyproline (PubMed:30735051). This is followed by the R domain releasing the nascent polyketide-peptide directly via a Dieckmann condensation to afford a tetramic acid fused to the hydroxyproline, generating the bicyclic pyrrolidinedione moiety (PubMed:30735051). The cytochrome P450 monooxygenases buaD and buaG are likely responsible for the multiple hydroxylations on the polyketide chain and its terminus, although in the heterologous context, buaD does not appear to be required. Therefore, while buaG may be a multifunctional cytochrome P450 monooxygenase, it cannot be ruled out that the two secondary alcohols on the polyketide chain could have an acetate origin (PubMed:30735051). Finally, the glycosyltransferase buaB transfers beta-D-mannose to the aglycone burnettramic acid A to form burnettramic acid A (PubMed:30735051). Burnettramic acid B is a minor cis-pyrrolizidine epimer of burnettramic acid A and it is likely that small amounts of it form naturally in acidic environments (PubMed:30735051). The role of the uncharacterized protein buaF in the biosynthesis of burnettramic acids has still to be determined (Probable).</text>
</comment>
<comment type="pathway">
    <text evidence="2">Mycotoxin biosynthesis.</text>
</comment>
<evidence type="ECO:0000256" key="1">
    <source>
        <dbReference type="SAM" id="MobiDB-lite"/>
    </source>
</evidence>
<evidence type="ECO:0000269" key="2">
    <source>
    </source>
</evidence>
<evidence type="ECO:0000303" key="3">
    <source>
    </source>
</evidence>
<evidence type="ECO:0000305" key="4">
    <source>
    </source>
</evidence>
<sequence length="412" mass="45296">MAIASSIGLVAEAIHRHKTPERPIESENDIARYPAEDEQWALDELQDELCQEEPSDSEDQPKKKIRNPAKLADDFLKRYPPPPSGSAPAGRLPLPVIIPQRRPGVRVRGFVRAYAPDLQACGIDQDTFMDFLVTMTRAGRAPQWMGAANLTAAAAFALPGHAIGCGVGFAIQVVNAIAMEMRGRVQANGFLQKLNQGFFQPRGLYCLVLSFDNTHEEAMTDESLATAIATTTDPKTGVRKYTDKLRSHSGTTGPSEFPESAPLVFPVLDWLETNANAEQAEKLGRYKKFRKFVADYYDRRAQAEYAARNPTSPLAAPPRRGFTSKLADPNDDTNKSPISLATGGLVPYNTTWRETRNSEGRRPPRKIADKVLYMIIVNMPSDDDMSRAESIMATEATTEPSVQSDDAEAAKG</sequence>
<protein>
    <recommendedName>
        <fullName evidence="3">Burnettramic acids biosynthesis cluster protein E</fullName>
    </recommendedName>
</protein>